<feature type="chain" id="PRO_0000217223" description="Capsular polysaccharide biosynthesis protein CapA">
    <location>
        <begin position="1"/>
        <end position="220"/>
    </location>
</feature>
<feature type="transmembrane region" description="Helical" evidence="2">
    <location>
        <begin position="20"/>
        <end position="40"/>
    </location>
</feature>
<feature type="transmembrane region" description="Helical" evidence="2">
    <location>
        <begin position="171"/>
        <end position="191"/>
    </location>
</feature>
<gene>
    <name type="primary">capA</name>
    <name type="ordered locus">MW2584</name>
</gene>
<organism>
    <name type="scientific">Staphylococcus aureus (strain MW2)</name>
    <dbReference type="NCBI Taxonomy" id="196620"/>
    <lineage>
        <taxon>Bacteria</taxon>
        <taxon>Bacillati</taxon>
        <taxon>Bacillota</taxon>
        <taxon>Bacilli</taxon>
        <taxon>Bacillales</taxon>
        <taxon>Staphylococcaceae</taxon>
        <taxon>Staphylococcus</taxon>
    </lineage>
</organism>
<accession>Q9RQQ1</accession>
<protein>
    <recommendedName>
        <fullName>Capsular polysaccharide biosynthesis protein CapA</fullName>
    </recommendedName>
</protein>
<proteinExistence type="inferred from homology"/>
<dbReference type="EMBL" id="BA000033">
    <property type="protein sequence ID" value="BAB96449.1"/>
    <property type="molecule type" value="Genomic_DNA"/>
</dbReference>
<dbReference type="RefSeq" id="WP_000659675.1">
    <property type="nucleotide sequence ID" value="NC_003923.1"/>
</dbReference>
<dbReference type="SMR" id="Q9RQQ1"/>
<dbReference type="KEGG" id="sam:MW2584"/>
<dbReference type="HOGENOM" id="CLU_082668_1_1_9"/>
<dbReference type="UniPathway" id="UPA00934"/>
<dbReference type="GO" id="GO:0005886">
    <property type="term" value="C:plasma membrane"/>
    <property type="evidence" value="ECO:0007669"/>
    <property type="project" value="UniProtKB-SubCell"/>
</dbReference>
<dbReference type="GO" id="GO:0004713">
    <property type="term" value="F:protein tyrosine kinase activity"/>
    <property type="evidence" value="ECO:0007669"/>
    <property type="project" value="TreeGrafter"/>
</dbReference>
<dbReference type="GO" id="GO:0045227">
    <property type="term" value="P:capsule polysaccharide biosynthetic process"/>
    <property type="evidence" value="ECO:0007669"/>
    <property type="project" value="UniProtKB-UniPathway"/>
</dbReference>
<dbReference type="InterPro" id="IPR050445">
    <property type="entry name" value="Bact_polysacc_biosynth/exp"/>
</dbReference>
<dbReference type="InterPro" id="IPR003856">
    <property type="entry name" value="LPS_length_determ_N_term"/>
</dbReference>
<dbReference type="PANTHER" id="PTHR32309:SF13">
    <property type="entry name" value="FERRIC ENTEROBACTIN TRANSPORT PROTEIN FEPE"/>
    <property type="match status" value="1"/>
</dbReference>
<dbReference type="PANTHER" id="PTHR32309">
    <property type="entry name" value="TYROSINE-PROTEIN KINASE"/>
    <property type="match status" value="1"/>
</dbReference>
<dbReference type="Pfam" id="PF02706">
    <property type="entry name" value="Wzz"/>
    <property type="match status" value="1"/>
</dbReference>
<comment type="function">
    <text evidence="1">Required for the biosynthesis of type 1 capsular polysaccharide.</text>
</comment>
<comment type="pathway">
    <text>Capsule biogenesis; capsule polysaccharide biosynthesis.</text>
</comment>
<comment type="subcellular location">
    <subcellularLocation>
        <location evidence="3">Cell membrane</location>
        <topology evidence="3">Multi-pass membrane protein</topology>
    </subcellularLocation>
</comment>
<comment type="similarity">
    <text evidence="3">Belongs to the CpsC/CapA family.</text>
</comment>
<sequence length="220" mass="24340">MKEKFDLVKLLNILKKNIKLLLILPAICLVVSAALTFFVMPDKYTASTQILVNMKKSSSDLAFQNVQSSLQSVNTYTEIIKSPRILDKVSREFDGQYSTAELNSFLKVTNQTNSQIITVSVTTGNKSESDKIVNKISKVFAHDMPKIMSVDNVTILSSAHDNAVKVSPIVSVNLVISIIVGIVLAILIIFLKELLDKRIKTEEDVESQLGLPILGSIQKF</sequence>
<reference key="1">
    <citation type="journal article" date="2002" name="Lancet">
        <title>Genome and virulence determinants of high virulence community-acquired MRSA.</title>
        <authorList>
            <person name="Baba T."/>
            <person name="Takeuchi F."/>
            <person name="Kuroda M."/>
            <person name="Yuzawa H."/>
            <person name="Aoki K."/>
            <person name="Oguchi A."/>
            <person name="Nagai Y."/>
            <person name="Iwama N."/>
            <person name="Asano K."/>
            <person name="Naimi T."/>
            <person name="Kuroda H."/>
            <person name="Cui L."/>
            <person name="Yamamoto K."/>
            <person name="Hiramatsu K."/>
        </authorList>
    </citation>
    <scope>NUCLEOTIDE SEQUENCE [LARGE SCALE GENOMIC DNA]</scope>
    <source>
        <strain>MW2</strain>
    </source>
</reference>
<name>CAPA_STAAW</name>
<keyword id="KW-0972">Capsule biogenesis/degradation</keyword>
<keyword id="KW-1003">Cell membrane</keyword>
<keyword id="KW-0270">Exopolysaccharide synthesis</keyword>
<keyword id="KW-0472">Membrane</keyword>
<keyword id="KW-0812">Transmembrane</keyword>
<keyword id="KW-1133">Transmembrane helix</keyword>
<evidence type="ECO:0000250" key="1"/>
<evidence type="ECO:0000255" key="2"/>
<evidence type="ECO:0000305" key="3"/>